<keyword id="KW-0413">Isomerase</keyword>
<keyword id="KW-1185">Reference proteome</keyword>
<keyword id="KW-0819">tRNA processing</keyword>
<comment type="function">
    <text evidence="1">Responsible for synthesis of pseudouridine from uracil-55 in the psi GC loop of transfer RNAs.</text>
</comment>
<comment type="catalytic activity">
    <reaction evidence="1">
        <text>uridine(55) in tRNA = pseudouridine(55) in tRNA</text>
        <dbReference type="Rhea" id="RHEA:42532"/>
        <dbReference type="Rhea" id="RHEA-COMP:10101"/>
        <dbReference type="Rhea" id="RHEA-COMP:10102"/>
        <dbReference type="ChEBI" id="CHEBI:65314"/>
        <dbReference type="ChEBI" id="CHEBI:65315"/>
        <dbReference type="EC" id="5.4.99.25"/>
    </reaction>
</comment>
<comment type="similarity">
    <text evidence="1">Belongs to the pseudouridine synthase TruB family. Type 1 subfamily.</text>
</comment>
<organism>
    <name type="scientific">Streptococcus agalactiae serotype V (strain ATCC BAA-611 / 2603 V/R)</name>
    <dbReference type="NCBI Taxonomy" id="208435"/>
    <lineage>
        <taxon>Bacteria</taxon>
        <taxon>Bacillati</taxon>
        <taxon>Bacillota</taxon>
        <taxon>Bacilli</taxon>
        <taxon>Lactobacillales</taxon>
        <taxon>Streptococcaceae</taxon>
        <taxon>Streptococcus</taxon>
    </lineage>
</organism>
<protein>
    <recommendedName>
        <fullName evidence="1">tRNA pseudouridine synthase B</fullName>
        <ecNumber evidence="1">5.4.99.25</ecNumber>
    </recommendedName>
    <alternativeName>
        <fullName evidence="1">tRNA pseudouridine(55) synthase</fullName>
        <shortName evidence="1">Psi55 synthase</shortName>
    </alternativeName>
    <alternativeName>
        <fullName evidence="1">tRNA pseudouridylate synthase</fullName>
    </alternativeName>
    <alternativeName>
        <fullName evidence="1">tRNA-uridine isomerase</fullName>
    </alternativeName>
</protein>
<sequence length="294" mass="32907">MITGIINLKKEAGMTSHDAVFKLRKILHTKKIGHGGTLDPDVVGVLPIAVGKATRVIEYMTESGKIYEGEITLGYATSTEDSSGEVISRTPLTQSDLSEDVVDHAMKSFTGPITQVPPMYSAVKVNGKKLYEYARSGEEVERPKRQITISEFRRTSPLYFEKGICRFSFYVSCSKGTYVRTLAVDLGIKLGYASHMSFLKRTSSAGLSITQSLTLEEINEKYKQEDFSFLLPIEYGVLDLPKVNLTEEDKVEISYGRRILLENEADTLAAFYENRVIAILEKRGNEFKPHKVLL</sequence>
<evidence type="ECO:0000255" key="1">
    <source>
        <dbReference type="HAMAP-Rule" id="MF_01080"/>
    </source>
</evidence>
<reference key="1">
    <citation type="journal article" date="2002" name="Proc. Natl. Acad. Sci. U.S.A.">
        <title>Complete genome sequence and comparative genomic analysis of an emerging human pathogen, serotype V Streptococcus agalactiae.</title>
        <authorList>
            <person name="Tettelin H."/>
            <person name="Masignani V."/>
            <person name="Cieslewicz M.J."/>
            <person name="Eisen J.A."/>
            <person name="Peterson S.N."/>
            <person name="Wessels M.R."/>
            <person name="Paulsen I.T."/>
            <person name="Nelson K.E."/>
            <person name="Margarit I."/>
            <person name="Read T.D."/>
            <person name="Madoff L.C."/>
            <person name="Wolf A.M."/>
            <person name="Beanan M.J."/>
            <person name="Brinkac L.M."/>
            <person name="Daugherty S.C."/>
            <person name="DeBoy R.T."/>
            <person name="Durkin A.S."/>
            <person name="Kolonay J.F."/>
            <person name="Madupu R."/>
            <person name="Lewis M.R."/>
            <person name="Radune D."/>
            <person name="Fedorova N.B."/>
            <person name="Scanlan D."/>
            <person name="Khouri H.M."/>
            <person name="Mulligan S."/>
            <person name="Carty H.A."/>
            <person name="Cline R.T."/>
            <person name="Van Aken S.E."/>
            <person name="Gill J."/>
            <person name="Scarselli M."/>
            <person name="Mora M."/>
            <person name="Iacobini E.T."/>
            <person name="Brettoni C."/>
            <person name="Galli G."/>
            <person name="Mariani M."/>
            <person name="Vegni F."/>
            <person name="Maione D."/>
            <person name="Rinaudo D."/>
            <person name="Rappuoli R."/>
            <person name="Telford J.L."/>
            <person name="Kasper D.L."/>
            <person name="Grandi G."/>
            <person name="Fraser C.M."/>
        </authorList>
    </citation>
    <scope>NUCLEOTIDE SEQUENCE [LARGE SCALE GENOMIC DNA]</scope>
    <source>
        <strain>ATCC BAA-611 / 2603 V/R</strain>
    </source>
</reference>
<name>TRUB_STRA5</name>
<feature type="chain" id="PRO_0000121911" description="tRNA pseudouridine synthase B">
    <location>
        <begin position="1"/>
        <end position="294"/>
    </location>
</feature>
<feature type="active site" description="Nucleophile" evidence="1">
    <location>
        <position position="39"/>
    </location>
</feature>
<gene>
    <name evidence="1" type="primary">truB</name>
    <name type="ordered locus">SAG0998</name>
</gene>
<accession>P65857</accession>
<accession>Q8CX11</accession>
<accession>Q8E5J6</accession>
<dbReference type="EC" id="5.4.99.25" evidence="1"/>
<dbReference type="EMBL" id="AE009948">
    <property type="protein sequence ID" value="AAM99881.1"/>
    <property type="molecule type" value="Genomic_DNA"/>
</dbReference>
<dbReference type="RefSeq" id="NP_688009.1">
    <property type="nucleotide sequence ID" value="NC_004116.1"/>
</dbReference>
<dbReference type="RefSeq" id="WP_001873502.1">
    <property type="nucleotide sequence ID" value="NC_004116.1"/>
</dbReference>
<dbReference type="SMR" id="P65857"/>
<dbReference type="STRING" id="208435.SAG0998"/>
<dbReference type="GeneID" id="66885938"/>
<dbReference type="KEGG" id="sag:SAG0998"/>
<dbReference type="PATRIC" id="fig|208435.3.peg.1005"/>
<dbReference type="HOGENOM" id="CLU_032087_0_1_9"/>
<dbReference type="OrthoDB" id="9802309at2"/>
<dbReference type="Proteomes" id="UP000000821">
    <property type="component" value="Chromosome"/>
</dbReference>
<dbReference type="GO" id="GO:0003723">
    <property type="term" value="F:RNA binding"/>
    <property type="evidence" value="ECO:0007669"/>
    <property type="project" value="InterPro"/>
</dbReference>
<dbReference type="GO" id="GO:0160148">
    <property type="term" value="F:tRNA pseudouridine(55) synthase activity"/>
    <property type="evidence" value="ECO:0007669"/>
    <property type="project" value="UniProtKB-EC"/>
</dbReference>
<dbReference type="GO" id="GO:1990481">
    <property type="term" value="P:mRNA pseudouridine synthesis"/>
    <property type="evidence" value="ECO:0007669"/>
    <property type="project" value="TreeGrafter"/>
</dbReference>
<dbReference type="GO" id="GO:0031119">
    <property type="term" value="P:tRNA pseudouridine synthesis"/>
    <property type="evidence" value="ECO:0007669"/>
    <property type="project" value="UniProtKB-UniRule"/>
</dbReference>
<dbReference type="CDD" id="cd02573">
    <property type="entry name" value="PseudoU_synth_EcTruB"/>
    <property type="match status" value="1"/>
</dbReference>
<dbReference type="FunFam" id="3.30.2350.10:FF:000011">
    <property type="entry name" value="tRNA pseudouridine synthase B"/>
    <property type="match status" value="1"/>
</dbReference>
<dbReference type="Gene3D" id="3.30.2350.10">
    <property type="entry name" value="Pseudouridine synthase"/>
    <property type="match status" value="1"/>
</dbReference>
<dbReference type="HAMAP" id="MF_01080">
    <property type="entry name" value="TruB_bact"/>
    <property type="match status" value="1"/>
</dbReference>
<dbReference type="InterPro" id="IPR020103">
    <property type="entry name" value="PsdUridine_synth_cat_dom_sf"/>
</dbReference>
<dbReference type="InterPro" id="IPR002501">
    <property type="entry name" value="PsdUridine_synth_N"/>
</dbReference>
<dbReference type="InterPro" id="IPR014780">
    <property type="entry name" value="tRNA_psdUridine_synth_TruB"/>
</dbReference>
<dbReference type="InterPro" id="IPR032819">
    <property type="entry name" value="TruB_C"/>
</dbReference>
<dbReference type="NCBIfam" id="TIGR00431">
    <property type="entry name" value="TruB"/>
    <property type="match status" value="1"/>
</dbReference>
<dbReference type="PANTHER" id="PTHR13767:SF2">
    <property type="entry name" value="PSEUDOURIDYLATE SYNTHASE TRUB1"/>
    <property type="match status" value="1"/>
</dbReference>
<dbReference type="PANTHER" id="PTHR13767">
    <property type="entry name" value="TRNA-PSEUDOURIDINE SYNTHASE"/>
    <property type="match status" value="1"/>
</dbReference>
<dbReference type="Pfam" id="PF16198">
    <property type="entry name" value="TruB_C_2"/>
    <property type="match status" value="1"/>
</dbReference>
<dbReference type="Pfam" id="PF01509">
    <property type="entry name" value="TruB_N"/>
    <property type="match status" value="1"/>
</dbReference>
<dbReference type="SUPFAM" id="SSF55120">
    <property type="entry name" value="Pseudouridine synthase"/>
    <property type="match status" value="1"/>
</dbReference>
<proteinExistence type="inferred from homology"/>